<organism>
    <name type="scientific">Mus musculus</name>
    <name type="common">Mouse</name>
    <dbReference type="NCBI Taxonomy" id="10090"/>
    <lineage>
        <taxon>Eukaryota</taxon>
        <taxon>Metazoa</taxon>
        <taxon>Chordata</taxon>
        <taxon>Craniata</taxon>
        <taxon>Vertebrata</taxon>
        <taxon>Euteleostomi</taxon>
        <taxon>Mammalia</taxon>
        <taxon>Eutheria</taxon>
        <taxon>Euarchontoglires</taxon>
        <taxon>Glires</taxon>
        <taxon>Rodentia</taxon>
        <taxon>Myomorpha</taxon>
        <taxon>Muroidea</taxon>
        <taxon>Muridae</taxon>
        <taxon>Murinae</taxon>
        <taxon>Mus</taxon>
        <taxon>Mus</taxon>
    </lineage>
</organism>
<reference key="1">
    <citation type="journal article" date="2005" name="Science">
        <title>The transcriptional landscape of the mammalian genome.</title>
        <authorList>
            <person name="Carninci P."/>
            <person name="Kasukawa T."/>
            <person name="Katayama S."/>
            <person name="Gough J."/>
            <person name="Frith M.C."/>
            <person name="Maeda N."/>
            <person name="Oyama R."/>
            <person name="Ravasi T."/>
            <person name="Lenhard B."/>
            <person name="Wells C."/>
            <person name="Kodzius R."/>
            <person name="Shimokawa K."/>
            <person name="Bajic V.B."/>
            <person name="Brenner S.E."/>
            <person name="Batalov S."/>
            <person name="Forrest A.R."/>
            <person name="Zavolan M."/>
            <person name="Davis M.J."/>
            <person name="Wilming L.G."/>
            <person name="Aidinis V."/>
            <person name="Allen J.E."/>
            <person name="Ambesi-Impiombato A."/>
            <person name="Apweiler R."/>
            <person name="Aturaliya R.N."/>
            <person name="Bailey T.L."/>
            <person name="Bansal M."/>
            <person name="Baxter L."/>
            <person name="Beisel K.W."/>
            <person name="Bersano T."/>
            <person name="Bono H."/>
            <person name="Chalk A.M."/>
            <person name="Chiu K.P."/>
            <person name="Choudhary V."/>
            <person name="Christoffels A."/>
            <person name="Clutterbuck D.R."/>
            <person name="Crowe M.L."/>
            <person name="Dalla E."/>
            <person name="Dalrymple B.P."/>
            <person name="de Bono B."/>
            <person name="Della Gatta G."/>
            <person name="di Bernardo D."/>
            <person name="Down T."/>
            <person name="Engstrom P."/>
            <person name="Fagiolini M."/>
            <person name="Faulkner G."/>
            <person name="Fletcher C.F."/>
            <person name="Fukushima T."/>
            <person name="Furuno M."/>
            <person name="Futaki S."/>
            <person name="Gariboldi M."/>
            <person name="Georgii-Hemming P."/>
            <person name="Gingeras T.R."/>
            <person name="Gojobori T."/>
            <person name="Green R.E."/>
            <person name="Gustincich S."/>
            <person name="Harbers M."/>
            <person name="Hayashi Y."/>
            <person name="Hensch T.K."/>
            <person name="Hirokawa N."/>
            <person name="Hill D."/>
            <person name="Huminiecki L."/>
            <person name="Iacono M."/>
            <person name="Ikeo K."/>
            <person name="Iwama A."/>
            <person name="Ishikawa T."/>
            <person name="Jakt M."/>
            <person name="Kanapin A."/>
            <person name="Katoh M."/>
            <person name="Kawasawa Y."/>
            <person name="Kelso J."/>
            <person name="Kitamura H."/>
            <person name="Kitano H."/>
            <person name="Kollias G."/>
            <person name="Krishnan S.P."/>
            <person name="Kruger A."/>
            <person name="Kummerfeld S.K."/>
            <person name="Kurochkin I.V."/>
            <person name="Lareau L.F."/>
            <person name="Lazarevic D."/>
            <person name="Lipovich L."/>
            <person name="Liu J."/>
            <person name="Liuni S."/>
            <person name="McWilliam S."/>
            <person name="Madan Babu M."/>
            <person name="Madera M."/>
            <person name="Marchionni L."/>
            <person name="Matsuda H."/>
            <person name="Matsuzawa S."/>
            <person name="Miki H."/>
            <person name="Mignone F."/>
            <person name="Miyake S."/>
            <person name="Morris K."/>
            <person name="Mottagui-Tabar S."/>
            <person name="Mulder N."/>
            <person name="Nakano N."/>
            <person name="Nakauchi H."/>
            <person name="Ng P."/>
            <person name="Nilsson R."/>
            <person name="Nishiguchi S."/>
            <person name="Nishikawa S."/>
            <person name="Nori F."/>
            <person name="Ohara O."/>
            <person name="Okazaki Y."/>
            <person name="Orlando V."/>
            <person name="Pang K.C."/>
            <person name="Pavan W.J."/>
            <person name="Pavesi G."/>
            <person name="Pesole G."/>
            <person name="Petrovsky N."/>
            <person name="Piazza S."/>
            <person name="Reed J."/>
            <person name="Reid J.F."/>
            <person name="Ring B.Z."/>
            <person name="Ringwald M."/>
            <person name="Rost B."/>
            <person name="Ruan Y."/>
            <person name="Salzberg S.L."/>
            <person name="Sandelin A."/>
            <person name="Schneider C."/>
            <person name="Schoenbach C."/>
            <person name="Sekiguchi K."/>
            <person name="Semple C.A."/>
            <person name="Seno S."/>
            <person name="Sessa L."/>
            <person name="Sheng Y."/>
            <person name="Shibata Y."/>
            <person name="Shimada H."/>
            <person name="Shimada K."/>
            <person name="Silva D."/>
            <person name="Sinclair B."/>
            <person name="Sperling S."/>
            <person name="Stupka E."/>
            <person name="Sugiura K."/>
            <person name="Sultana R."/>
            <person name="Takenaka Y."/>
            <person name="Taki K."/>
            <person name="Tammoja K."/>
            <person name="Tan S.L."/>
            <person name="Tang S."/>
            <person name="Taylor M.S."/>
            <person name="Tegner J."/>
            <person name="Teichmann S.A."/>
            <person name="Ueda H.R."/>
            <person name="van Nimwegen E."/>
            <person name="Verardo R."/>
            <person name="Wei C.L."/>
            <person name="Yagi K."/>
            <person name="Yamanishi H."/>
            <person name="Zabarovsky E."/>
            <person name="Zhu S."/>
            <person name="Zimmer A."/>
            <person name="Hide W."/>
            <person name="Bult C."/>
            <person name="Grimmond S.M."/>
            <person name="Teasdale R.D."/>
            <person name="Liu E.T."/>
            <person name="Brusic V."/>
            <person name="Quackenbush J."/>
            <person name="Wahlestedt C."/>
            <person name="Mattick J.S."/>
            <person name="Hume D.A."/>
            <person name="Kai C."/>
            <person name="Sasaki D."/>
            <person name="Tomaru Y."/>
            <person name="Fukuda S."/>
            <person name="Kanamori-Katayama M."/>
            <person name="Suzuki M."/>
            <person name="Aoki J."/>
            <person name="Arakawa T."/>
            <person name="Iida J."/>
            <person name="Imamura K."/>
            <person name="Itoh M."/>
            <person name="Kato T."/>
            <person name="Kawaji H."/>
            <person name="Kawagashira N."/>
            <person name="Kawashima T."/>
            <person name="Kojima M."/>
            <person name="Kondo S."/>
            <person name="Konno H."/>
            <person name="Nakano K."/>
            <person name="Ninomiya N."/>
            <person name="Nishio T."/>
            <person name="Okada M."/>
            <person name="Plessy C."/>
            <person name="Shibata K."/>
            <person name="Shiraki T."/>
            <person name="Suzuki S."/>
            <person name="Tagami M."/>
            <person name="Waki K."/>
            <person name="Watahiki A."/>
            <person name="Okamura-Oho Y."/>
            <person name="Suzuki H."/>
            <person name="Kawai J."/>
            <person name="Hayashizaki Y."/>
        </authorList>
    </citation>
    <scope>NUCLEOTIDE SEQUENCE [LARGE SCALE MRNA]</scope>
    <source>
        <strain>C57BL/6J</strain>
        <strain>NOD</strain>
        <tissue>Testis</tissue>
        <tissue>Thymus</tissue>
        <tissue>Wolffian duct</tissue>
    </source>
</reference>
<reference key="2">
    <citation type="journal article" date="2009" name="PLoS Biol.">
        <title>Lineage-specific biology revealed by a finished genome assembly of the mouse.</title>
        <authorList>
            <person name="Church D.M."/>
            <person name="Goodstadt L."/>
            <person name="Hillier L.W."/>
            <person name="Zody M.C."/>
            <person name="Goldstein S."/>
            <person name="She X."/>
            <person name="Bult C.J."/>
            <person name="Agarwala R."/>
            <person name="Cherry J.L."/>
            <person name="DiCuccio M."/>
            <person name="Hlavina W."/>
            <person name="Kapustin Y."/>
            <person name="Meric P."/>
            <person name="Maglott D."/>
            <person name="Birtle Z."/>
            <person name="Marques A.C."/>
            <person name="Graves T."/>
            <person name="Zhou S."/>
            <person name="Teague B."/>
            <person name="Potamousis K."/>
            <person name="Churas C."/>
            <person name="Place M."/>
            <person name="Herschleb J."/>
            <person name="Runnheim R."/>
            <person name="Forrest D."/>
            <person name="Amos-Landgraf J."/>
            <person name="Schwartz D.C."/>
            <person name="Cheng Z."/>
            <person name="Lindblad-Toh K."/>
            <person name="Eichler E.E."/>
            <person name="Ponting C.P."/>
        </authorList>
    </citation>
    <scope>NUCLEOTIDE SEQUENCE [LARGE SCALE GENOMIC DNA]</scope>
    <source>
        <strain>C57BL/6J</strain>
    </source>
</reference>
<reference key="3">
    <citation type="journal article" date="2004" name="Genome Res.">
        <title>The status, quality, and expansion of the NIH full-length cDNA project: the Mammalian Gene Collection (MGC).</title>
        <authorList>
            <consortium name="The MGC Project Team"/>
        </authorList>
    </citation>
    <scope>NUCLEOTIDE SEQUENCE [LARGE SCALE MRNA]</scope>
    <source>
        <strain>Czech II</strain>
        <tissue>Eye</tissue>
        <tissue>Mammary tumor</tissue>
    </source>
</reference>
<reference key="4">
    <citation type="journal article" date="2016" name="Mol. Cell. Biol.">
        <title>BAR domain-containing FAM92 proteins interact with chibby1 to facilitate ciliogenesis.</title>
        <authorList>
            <person name="Li F.Q."/>
            <person name="Chen X."/>
            <person name="Fisher C."/>
            <person name="Siller S.S."/>
            <person name="Zelikman K."/>
            <person name="Kuriyama R."/>
            <person name="Takemaru K.I."/>
        </authorList>
    </citation>
    <scope>SUBCELLULAR LOCATION</scope>
</reference>
<reference key="5">
    <citation type="journal article" date="2019" name="J. Bone Miner. Res.">
        <title>FAM92A underlies nonsyndromic postaxial polydactyly in humans and an abnormal limb and digit skeletal phenotype in mice.</title>
        <authorList>
            <person name="Schrauwen I."/>
            <person name="Giese A.P."/>
            <person name="Aziz A."/>
            <person name="Lafont D.T."/>
            <person name="Chakchouk I."/>
            <person name="Santos-Cortez R.L.P."/>
            <person name="Lee K."/>
            <person name="Acharya A."/>
            <person name="Khan F.S."/>
            <person name="Ullah A."/>
            <person name="Nickerson D.A."/>
            <person name="Bamshad M.J."/>
            <person name="Ali G."/>
            <person name="Riazuddin S."/>
            <person name="Ansar M."/>
            <person name="Ahmad W."/>
            <person name="Ahmed Z.M."/>
            <person name="Leal S.M."/>
        </authorList>
    </citation>
    <scope>FUNCTION</scope>
    <scope>TISSUE SPECIFICITY</scope>
    <scope>DEVELOPMENTAL STAGE</scope>
    <scope>DISRUPTION PHENOTYPE</scope>
</reference>
<reference key="6">
    <citation type="journal article" date="2018" name="Nat. Genet.">
        <title>A CRISPR-based screen for Hedgehog signaling provides insights into ciliary function and ciliopathies.</title>
        <authorList>
            <person name="Breslow D.K."/>
            <person name="Hoogendoorn S."/>
            <person name="Kopp A.R."/>
            <person name="Morgens D.W."/>
            <person name="Vu B.K."/>
            <person name="Kennedy M.C."/>
            <person name="Han K."/>
            <person name="Li A."/>
            <person name="Hess G.T."/>
            <person name="Bassik M.C."/>
            <person name="Chen J.K."/>
            <person name="Nachury M.V."/>
        </authorList>
    </citation>
    <scope>SUBCELLULAR LOCATION</scope>
    <scope>FUNCTION</scope>
</reference>
<reference key="7">
    <citation type="journal article" date="2019" name="J. Cell Biol.">
        <title>FAM92A1 is a BAR domain protein required for mitochondrial ultrastructure and function.</title>
        <authorList>
            <person name="Wang L."/>
            <person name="Yan Z."/>
            <person name="Vihinen H."/>
            <person name="Eriksson O."/>
            <person name="Wang W."/>
            <person name="Soliymani R."/>
            <person name="Lu Y."/>
            <person name="Xue Y."/>
            <person name="Jokitalo E."/>
            <person name="Li J."/>
            <person name="Zhao H."/>
        </authorList>
    </citation>
    <scope>SUBCELLULAR LOCATION</scope>
    <scope>TISSUE SPECIFICITY</scope>
</reference>
<reference key="8">
    <citation type="journal article" date="2024" name="J. Cell Biol.">
        <title>The Cby3/ciBAR1 complex positions the annulus along the sperm flagellum during spermiogenesis.</title>
        <authorList>
            <person name="Hoque M."/>
            <person name="Li F.Q."/>
            <person name="Weber W.D."/>
            <person name="Chen J.J."/>
            <person name="Kim E.N."/>
            <person name="Kuo P.L."/>
            <person name="Visconti P.E."/>
            <person name="Takemaru K.I."/>
        </authorList>
    </citation>
    <scope>FUNCTION</scope>
    <scope>SUBCELLULAR LOCATION</scope>
    <scope>DISRUPTION PHENOTYPE</scope>
    <scope>INTERACTION WITH CBY3</scope>
</reference>
<dbReference type="EMBL" id="AK019574">
    <property type="protein sequence ID" value="BAB31798.1"/>
    <property type="molecule type" value="mRNA"/>
</dbReference>
<dbReference type="EMBL" id="AK078438">
    <property type="protein sequence ID" value="BAC37273.1"/>
    <property type="status" value="ALT_INIT"/>
    <property type="molecule type" value="mRNA"/>
</dbReference>
<dbReference type="EMBL" id="AK088705">
    <property type="protein sequence ID" value="BAC40516.1"/>
    <property type="status" value="ALT_INIT"/>
    <property type="molecule type" value="mRNA"/>
</dbReference>
<dbReference type="EMBL" id="JH584272">
    <property type="status" value="NOT_ANNOTATED_CDS"/>
    <property type="molecule type" value="Genomic_DNA"/>
</dbReference>
<dbReference type="EMBL" id="BC020162">
    <property type="protein sequence ID" value="AAH20162.1"/>
    <property type="molecule type" value="mRNA"/>
</dbReference>
<dbReference type="EMBL" id="BC055848">
    <property type="protein sequence ID" value="AAH55848.1"/>
    <property type="molecule type" value="mRNA"/>
</dbReference>
<dbReference type="RefSeq" id="NP_001297672.1">
    <property type="nucleotide sequence ID" value="NM_001310743.1"/>
</dbReference>
<dbReference type="RefSeq" id="NP_080834.3">
    <property type="nucleotide sequence ID" value="NM_026558.5"/>
</dbReference>
<dbReference type="SMR" id="Q8BP22"/>
<dbReference type="BioGRID" id="212656">
    <property type="interactions" value="134"/>
</dbReference>
<dbReference type="FunCoup" id="Q8BP22">
    <property type="interactions" value="1155"/>
</dbReference>
<dbReference type="IntAct" id="Q8BP22">
    <property type="interactions" value="1"/>
</dbReference>
<dbReference type="STRING" id="10090.ENSMUSP00000103920"/>
<dbReference type="iPTMnet" id="Q8BP22"/>
<dbReference type="PhosphoSitePlus" id="Q8BP22"/>
<dbReference type="jPOST" id="Q8BP22"/>
<dbReference type="PaxDb" id="10090-ENSMUSP00000103920"/>
<dbReference type="ProteomicsDB" id="271545"/>
<dbReference type="Pumba" id="Q8BP22"/>
<dbReference type="Antibodypedia" id="25708">
    <property type="antibodies" value="120 antibodies from 21 providers"/>
</dbReference>
<dbReference type="DNASU" id="68099"/>
<dbReference type="GeneID" id="68099"/>
<dbReference type="KEGG" id="mmu:68099"/>
<dbReference type="UCSC" id="uc008saq.2">
    <property type="organism name" value="mouse"/>
</dbReference>
<dbReference type="AGR" id="MGI:1915349"/>
<dbReference type="CTD" id="137392"/>
<dbReference type="MGI" id="MGI:1915349">
    <property type="gene designation" value="Cibar1"/>
</dbReference>
<dbReference type="VEuPathDB" id="HostDB:ENSMUSG00000028218"/>
<dbReference type="eggNOG" id="ENOG502QQ0N">
    <property type="taxonomic scope" value="Eukaryota"/>
</dbReference>
<dbReference type="InParanoid" id="Q8BP22"/>
<dbReference type="OrthoDB" id="60621at2759"/>
<dbReference type="PhylomeDB" id="Q8BP22"/>
<dbReference type="TreeFam" id="TF324316"/>
<dbReference type="BioGRID-ORCS" id="68099">
    <property type="hits" value="5 hits in 76 CRISPR screens"/>
</dbReference>
<dbReference type="ChiTaRS" id="Fam92a">
    <property type="organism name" value="mouse"/>
</dbReference>
<dbReference type="PRO" id="PR:Q8BP22"/>
<dbReference type="Proteomes" id="UP000000589">
    <property type="component" value="Chromosome 4"/>
</dbReference>
<dbReference type="RNAct" id="Q8BP22">
    <property type="molecule type" value="protein"/>
</dbReference>
<dbReference type="Bgee" id="ENSMUSG00000028218">
    <property type="expression patterns" value="Expressed in vas deferens and 247 other cell types or tissues"/>
</dbReference>
<dbReference type="ExpressionAtlas" id="Q8BP22">
    <property type="expression patterns" value="baseline and differential"/>
</dbReference>
<dbReference type="GO" id="GO:0005814">
    <property type="term" value="C:centriole"/>
    <property type="evidence" value="ECO:0007669"/>
    <property type="project" value="UniProtKB-SubCell"/>
</dbReference>
<dbReference type="GO" id="GO:0036064">
    <property type="term" value="C:ciliary basal body"/>
    <property type="evidence" value="ECO:0000314"/>
    <property type="project" value="UniProtKB"/>
</dbReference>
<dbReference type="GO" id="GO:0035869">
    <property type="term" value="C:ciliary transition zone"/>
    <property type="evidence" value="ECO:0000314"/>
    <property type="project" value="UniProtKB"/>
</dbReference>
<dbReference type="GO" id="GO:0005929">
    <property type="term" value="C:cilium"/>
    <property type="evidence" value="ECO:0000314"/>
    <property type="project" value="UniProtKB"/>
</dbReference>
<dbReference type="GO" id="GO:0005737">
    <property type="term" value="C:cytoplasm"/>
    <property type="evidence" value="ECO:0000250"/>
    <property type="project" value="UniProtKB"/>
</dbReference>
<dbReference type="GO" id="GO:0005743">
    <property type="term" value="C:mitochondrial inner membrane"/>
    <property type="evidence" value="ECO:0000250"/>
    <property type="project" value="UniProtKB"/>
</dbReference>
<dbReference type="GO" id="GO:0005739">
    <property type="term" value="C:mitochondrion"/>
    <property type="evidence" value="ECO:0000314"/>
    <property type="project" value="UniProtKB"/>
</dbReference>
<dbReference type="GO" id="GO:0005634">
    <property type="term" value="C:nucleus"/>
    <property type="evidence" value="ECO:0000250"/>
    <property type="project" value="UniProtKB"/>
</dbReference>
<dbReference type="GO" id="GO:0097227">
    <property type="term" value="C:sperm annulus"/>
    <property type="evidence" value="ECO:0000314"/>
    <property type="project" value="UniProtKB"/>
</dbReference>
<dbReference type="GO" id="GO:0060271">
    <property type="term" value="P:cilium assembly"/>
    <property type="evidence" value="ECO:0000315"/>
    <property type="project" value="UniProtKB"/>
</dbReference>
<dbReference type="GO" id="GO:0007007">
    <property type="term" value="P:inner mitochondrial membrane organization"/>
    <property type="evidence" value="ECO:0000250"/>
    <property type="project" value="UniProtKB"/>
</dbReference>
<dbReference type="GO" id="GO:0035108">
    <property type="term" value="P:limb morphogenesis"/>
    <property type="evidence" value="ECO:0000315"/>
    <property type="project" value="UniProtKB"/>
</dbReference>
<dbReference type="GO" id="GO:0045880">
    <property type="term" value="P:positive regulation of smoothened signaling pathway"/>
    <property type="evidence" value="ECO:0000315"/>
    <property type="project" value="UniProtKB"/>
</dbReference>
<dbReference type="GO" id="GO:0007283">
    <property type="term" value="P:spermatogenesis"/>
    <property type="evidence" value="ECO:0000315"/>
    <property type="project" value="UniProtKB"/>
</dbReference>
<dbReference type="CDD" id="cd07598">
    <property type="entry name" value="BAR_FAM92"/>
    <property type="match status" value="1"/>
</dbReference>
<dbReference type="FunFam" id="1.20.1270.60:FF:000047">
    <property type="entry name" value="protein FAM92A isoform X1"/>
    <property type="match status" value="1"/>
</dbReference>
<dbReference type="Gene3D" id="1.20.1270.60">
    <property type="entry name" value="Arfaptin homology (AH) domain/BAR domain"/>
    <property type="match status" value="1"/>
</dbReference>
<dbReference type="InterPro" id="IPR027267">
    <property type="entry name" value="AH/BAR_dom_sf"/>
</dbReference>
<dbReference type="InterPro" id="IPR035590">
    <property type="entry name" value="BAR_CBAR1/2"/>
</dbReference>
<dbReference type="InterPro" id="IPR009602">
    <property type="entry name" value="CBAR/FAM92"/>
</dbReference>
<dbReference type="PANTHER" id="PTHR21223:SF4">
    <property type="entry name" value="CBY1-INTERACTING BAR DOMAIN-CONTAINING PROTEIN 1"/>
    <property type="match status" value="1"/>
</dbReference>
<dbReference type="PANTHER" id="PTHR21223">
    <property type="entry name" value="CBY1-INTERACTING BAR DOMAIN-CONTAINING PROTEIN HOMOLOG"/>
    <property type="match status" value="1"/>
</dbReference>
<dbReference type="Pfam" id="PF06730">
    <property type="entry name" value="FAM92"/>
    <property type="match status" value="1"/>
</dbReference>
<dbReference type="SUPFAM" id="SSF103657">
    <property type="entry name" value="BAR/IMD domain-like"/>
    <property type="match status" value="1"/>
</dbReference>
<name>CBAR1_MOUSE</name>
<feature type="transit peptide" description="Mitochondrion" evidence="1">
    <location>
        <begin position="1"/>
        <end position="47"/>
    </location>
</feature>
<feature type="chain" id="PRO_0000287081" description="CBY1-interacting BAR domain-containing protein 1">
    <location>
        <begin position="48"/>
        <end position="286"/>
    </location>
</feature>
<feature type="region of interest" description="BAR-like" evidence="1">
    <location>
        <begin position="10"/>
        <end position="220"/>
    </location>
</feature>
<feature type="region of interest" description="Disordered" evidence="3">
    <location>
        <begin position="258"/>
        <end position="286"/>
    </location>
</feature>
<feature type="coiled-coil region" evidence="2">
    <location>
        <begin position="107"/>
        <end position="178"/>
    </location>
</feature>
<feature type="compositionally biased region" description="Acidic residues" evidence="3">
    <location>
        <begin position="271"/>
        <end position="286"/>
    </location>
</feature>
<feature type="sequence conflict" description="In Ref. 1; BAB31798." evidence="9" ref="1">
    <original>T</original>
    <variation>P</variation>
    <location>
        <position position="155"/>
    </location>
</feature>
<feature type="sequence conflict" description="In Ref. 3; AAH20162." evidence="9" ref="3">
    <original>N</original>
    <variation>K</variation>
    <location>
        <position position="211"/>
    </location>
</feature>
<gene>
    <name evidence="11" type="primary">Cibar1</name>
    <name type="synonym">Fam92a</name>
    <name type="synonym">Fam92a1</name>
</gene>
<keyword id="KW-0966">Cell projection</keyword>
<keyword id="KW-0969">Cilium</keyword>
<keyword id="KW-0970">Cilium biogenesis/degradation</keyword>
<keyword id="KW-0175">Coiled coil</keyword>
<keyword id="KW-0963">Cytoplasm</keyword>
<keyword id="KW-0206">Cytoskeleton</keyword>
<keyword id="KW-0221">Differentiation</keyword>
<keyword id="KW-0282">Flagellum</keyword>
<keyword id="KW-0472">Membrane</keyword>
<keyword id="KW-0496">Mitochondrion</keyword>
<keyword id="KW-0999">Mitochondrion inner membrane</keyword>
<keyword id="KW-0539">Nucleus</keyword>
<keyword id="KW-1185">Reference proteome</keyword>
<keyword id="KW-0744">Spermatogenesis</keyword>
<keyword id="KW-0809">Transit peptide</keyword>
<proteinExistence type="evidence at protein level"/>
<accession>Q8BP22</accession>
<accession>A2AVA5</accession>
<accession>A2AVA6</accession>
<accession>A2AVA7</accession>
<accession>Q7TNQ9</accession>
<accession>Q8C2F8</accession>
<accession>Q8VDU6</accession>
<accession>Q9D2J3</accession>
<evidence type="ECO:0000250" key="1">
    <source>
        <dbReference type="UniProtKB" id="A1XBS5"/>
    </source>
</evidence>
<evidence type="ECO:0000255" key="2"/>
<evidence type="ECO:0000256" key="3">
    <source>
        <dbReference type="SAM" id="MobiDB-lite"/>
    </source>
</evidence>
<evidence type="ECO:0000269" key="4">
    <source>
    </source>
</evidence>
<evidence type="ECO:0000269" key="5">
    <source>
    </source>
</evidence>
<evidence type="ECO:0000269" key="6">
    <source>
    </source>
</evidence>
<evidence type="ECO:0000269" key="7">
    <source>
    </source>
</evidence>
<evidence type="ECO:0000269" key="8">
    <source>
    </source>
</evidence>
<evidence type="ECO:0000305" key="9"/>
<evidence type="ECO:0000305" key="10">
    <source>
    </source>
</evidence>
<evidence type="ECO:0000312" key="11">
    <source>
        <dbReference type="MGI" id="MGI:1915349"/>
    </source>
</evidence>
<protein>
    <recommendedName>
        <fullName evidence="11">CBY1-interacting BAR domain-containing protein 1</fullName>
    </recommendedName>
</protein>
<sequence length="286" mass="33119">MLRRNLDERDAQTKQLQDAVTNVEKHFGELCQIFAAYVRKTARLRDKADLLVNEINLYASTETPNLKQGLKDFADEFAKLQDYRQAEVERLEAKVVEPLKAYGTIVKMKRDDLKATLTARNREAKQLSQLERTRQRNPSDRHVISQAETELQRATIDATRTSRHLEETIDNFEKQKIKDIKNILSEFITIEMLFHGKALEVFTAAYQNIQNIDEDEDLEVFRNSLYLSDYPSRLDIVRANSKSPLQRSLSTKCTSGTGQISTCRTRKDQQVEDEDDEELDVTEDEN</sequence>
<comment type="function">
    <text evidence="1 5 6 8">Plays a critical role in regulating mitochondrial ultrastructure and function by maintaining the integrity of mitochondrial morphology, particularly the organization of cristae (By similarity). Preferentially binds to negatively charged phospholipids like cardiolipin and phosphatidylinositol 4,5-bisphosphate enhancing its interaction with mitochondrial membranes (By similarity). Induces membrane curvature and tubulation, which are critical for maintaining mitochondrial ultrastructure and the organization of cristae (By similarity). Plays a crucial role in ciliogenesis (PubMed:29459677). May play a role in limb development through its role in ciliogenesis (PubMed:30395363). Plays a key role in the correct positioning of the annulus, a septin-based ring structure in the sperm flagellum, serving both as a physical barrier and a membrane diffusion barrier that separates the midpiece (MP) from the principal piece (PP) (PubMed:38197861). This positioning is essential for proper sperm motility and function (PubMed:38197861). Interacts with CBY3 to form a complex which localizes to the curved membrane region of the flagellar pocket (PubMed:38197861). By doing so, may provide stability and rigidity to the periannular membrane to prevent membrane deformation (PubMed:38197861). This function is crucial for halting annulus migration at the proximal end of the fibrous sheath-containing PP (PubMed:38197861).</text>
</comment>
<comment type="subunit">
    <text evidence="1 8">Homodimer (via BAR-like domain). Heterodimer with FAM92B (via BAR-like domains). Interacts (via BAR-like domain) with CBY1; this interaction is required for targeting FAM92A to centriole and cilium basal body (By similarity). Interacts (via BAR-like domain) with CBY3; both proteins form a ninefold symmetric structure at the flagellar base; are recruited to the annulus in a mutually dependent manner and regulate annulus positionning (PubMed:38197861).</text>
</comment>
<comment type="interaction">
    <interactant intactId="EBI-646638">
        <id>Q8BP22</id>
    </interactant>
    <interactant intactId="EBI-646260">
        <id>Q60680-1</id>
        <label>Chuk</label>
    </interactant>
    <organismsDiffer>false</organismsDiffer>
    <experiments>4</experiments>
</comment>
<comment type="subcellular location">
    <subcellularLocation>
        <location evidence="1">Cytoplasm</location>
    </subcellularLocation>
    <subcellularLocation>
        <location evidence="1">Cytoplasm</location>
        <location evidence="1">Cytoskeleton</location>
        <location evidence="1">Microtubule organizing center</location>
        <location evidence="1">Centrosome</location>
        <location evidence="1">Centriole</location>
    </subcellularLocation>
    <subcellularLocation>
        <location evidence="4">Cytoplasm</location>
        <location evidence="4">Cytoskeleton</location>
        <location evidence="4">Cilium basal body</location>
    </subcellularLocation>
    <subcellularLocation>
        <location evidence="5">Cell projection</location>
        <location evidence="5">Cilium</location>
    </subcellularLocation>
    <subcellularLocation>
        <location evidence="1">Nucleus</location>
    </subcellularLocation>
    <subcellularLocation>
        <location evidence="10">Mitochondrion inner membrane</location>
        <topology evidence="1">Peripheral membrane protein</topology>
        <orientation evidence="1">Matrix side</orientation>
    </subcellularLocation>
    <subcellularLocation>
        <location evidence="8">Cell projection</location>
        <location evidence="8">Cilium</location>
        <location evidence="8">Flagellum</location>
    </subcellularLocation>
    <text evidence="1 4 5 8">Weak punctate vesicular distribution throughout the cytoplasm. Localizes at the distal end of mother centrioles. Extensive colocalization with CBY1 at mother centrioles (PubMed:27528616). Localizes at the transition zone, a region between the basal body and the ciliary axoneme (PubMed:29459677). Localizes to the annulus at the junction between the midpiece (MP) and principal piece (PP) of the sperm flagellum (PubMed:38197861).</text>
</comment>
<comment type="tissue specificity">
    <text evidence="6 7">Expressed in the heart, liver, spleen, lung, kidney, brain and muscle (at protein level) (PubMed:30404948). Strongly expressed throughout the developing limb bud, including the progress zone and the apical ectodermal ridge (PubMed:30395363).</text>
</comment>
<comment type="developmental stage">
    <text evidence="6">High and steady expression is observed in the developing limb throughout embryonic stages 11.5-15.5 dpc.</text>
</comment>
<comment type="domain">
    <text evidence="1">The BAR-like domain displays limited similarity to other BAR domains.</text>
</comment>
<comment type="disruption phenotype">
    <text evidence="6 8">Knockout homozygous mice show uni- or bilateral abnormal bone growth or exostosis on the deltoid tuberosity of the humerus, abnormalities at the left stifle consistent with a tendon calcification, and abnormal digit morphology including polysyndactyly and osteomas on the hind paw metatarsals (PubMed:30395363). Exhibit male fertility defects, caused by kinked sperm flagella with the annulus mispositioned in the principal piece of the sperm (PubMed:38197861).</text>
</comment>
<comment type="similarity">
    <text evidence="9">Belongs to the CIBAR family.</text>
</comment>
<comment type="sequence caution" evidence="9">
    <conflict type="erroneous initiation">
        <sequence resource="EMBL-CDS" id="BAC37273"/>
    </conflict>
    <text>Extended N-terminus.</text>
</comment>
<comment type="sequence caution" evidence="9">
    <conflict type="erroneous initiation">
        <sequence resource="EMBL-CDS" id="BAC40516"/>
    </conflict>
    <text>Extended N-terminus.</text>
</comment>